<comment type="function">
    <text evidence="1">Catalyzes conversion of folates to polyglutamate derivatives allowing concentration of folate compounds in the cell and the intracellular retention of these cofactors, which are important substrates for most of the folate-dependent enzymes that are involved in one-carbon transfer reactions involved in purine, pyrimidine and amino acid synthesis.</text>
</comment>
<comment type="catalytic activity">
    <reaction>
        <text>(6S)-5,6,7,8-tetrahydrofolyl-(gamma-L-Glu)(n) + L-glutamate + ATP = (6S)-5,6,7,8-tetrahydrofolyl-(gamma-L-Glu)(n+1) + ADP + phosphate + H(+)</text>
        <dbReference type="Rhea" id="RHEA:10580"/>
        <dbReference type="Rhea" id="RHEA-COMP:14738"/>
        <dbReference type="Rhea" id="RHEA-COMP:14740"/>
        <dbReference type="ChEBI" id="CHEBI:15378"/>
        <dbReference type="ChEBI" id="CHEBI:29985"/>
        <dbReference type="ChEBI" id="CHEBI:30616"/>
        <dbReference type="ChEBI" id="CHEBI:43474"/>
        <dbReference type="ChEBI" id="CHEBI:141005"/>
        <dbReference type="ChEBI" id="CHEBI:456216"/>
        <dbReference type="EC" id="6.3.2.17"/>
    </reaction>
</comment>
<comment type="cofactor">
    <cofactor evidence="1">
        <name>a monovalent cation</name>
        <dbReference type="ChEBI" id="CHEBI:60242"/>
    </cofactor>
    <text evidence="1">A monovalent cation.</text>
</comment>
<comment type="pathway">
    <text>Cofactor biosynthesis; tetrahydrofolylpolyglutamate biosynthesis.</text>
</comment>
<comment type="subcellular location">
    <subcellularLocation>
        <location evidence="1">Mitochondrion inner membrane</location>
    </subcellularLocation>
    <subcellularLocation>
        <location evidence="1">Mitochondrion matrix</location>
    </subcellularLocation>
    <subcellularLocation>
        <location evidence="1">Cytoplasm</location>
    </subcellularLocation>
</comment>
<comment type="similarity">
    <text evidence="3">Belongs to the folylpolyglutamate synthase family.</text>
</comment>
<accession>Q9Y893</accession>
<name>FOLE_CANAX</name>
<reference key="1">
    <citation type="submission" date="1999-06" db="EMBL/GenBank/DDBJ databases">
        <title>Sequencing of a Candida albicans genomic library plasmid which encodes the complete open reading frame of folylpolyglutamate synthetase.</title>
        <authorList>
            <person name="Subramanian M."/>
            <person name="Li C."/>
            <person name="DeSouza L."/>
            <person name="Bognar A.L."/>
        </authorList>
    </citation>
    <scope>NUCLEOTIDE SEQUENCE [GENOMIC DNA]</scope>
</reference>
<gene>
    <name type="primary">MET7</name>
</gene>
<dbReference type="EC" id="6.3.2.17"/>
<dbReference type="EMBL" id="AF156928">
    <property type="protein sequence ID" value="AAD40312.1"/>
    <property type="molecule type" value="Genomic_DNA"/>
</dbReference>
<dbReference type="SMR" id="Q9Y893"/>
<dbReference type="VEuPathDB" id="FungiDB:C2_04380C_A"/>
<dbReference type="VEuPathDB" id="FungiDB:CAWG_04194"/>
<dbReference type="UniPathway" id="UPA00850"/>
<dbReference type="GO" id="GO:0005829">
    <property type="term" value="C:cytosol"/>
    <property type="evidence" value="ECO:0007669"/>
    <property type="project" value="TreeGrafter"/>
</dbReference>
<dbReference type="GO" id="GO:0005743">
    <property type="term" value="C:mitochondrial inner membrane"/>
    <property type="evidence" value="ECO:0007669"/>
    <property type="project" value="UniProtKB-SubCell"/>
</dbReference>
<dbReference type="GO" id="GO:0005759">
    <property type="term" value="C:mitochondrial matrix"/>
    <property type="evidence" value="ECO:0007669"/>
    <property type="project" value="UniProtKB-SubCell"/>
</dbReference>
<dbReference type="GO" id="GO:0005524">
    <property type="term" value="F:ATP binding"/>
    <property type="evidence" value="ECO:0007669"/>
    <property type="project" value="UniProtKB-KW"/>
</dbReference>
<dbReference type="GO" id="GO:0046872">
    <property type="term" value="F:metal ion binding"/>
    <property type="evidence" value="ECO:0007669"/>
    <property type="project" value="UniProtKB-KW"/>
</dbReference>
<dbReference type="GO" id="GO:0004326">
    <property type="term" value="F:tetrahydrofolylpolyglutamate synthase activity"/>
    <property type="evidence" value="ECO:0007669"/>
    <property type="project" value="UniProtKB-EC"/>
</dbReference>
<dbReference type="GO" id="GO:0006730">
    <property type="term" value="P:one-carbon metabolic process"/>
    <property type="evidence" value="ECO:0007669"/>
    <property type="project" value="UniProtKB-KW"/>
</dbReference>
<dbReference type="FunFam" id="3.40.1190.10:FF:000009">
    <property type="entry name" value="Folylpolyglutamate synthase"/>
    <property type="match status" value="1"/>
</dbReference>
<dbReference type="FunFam" id="3.90.190.20:FF:000009">
    <property type="entry name" value="Folylpolyglutamate synthase"/>
    <property type="match status" value="1"/>
</dbReference>
<dbReference type="Gene3D" id="3.90.190.20">
    <property type="entry name" value="Mur ligase, C-terminal domain"/>
    <property type="match status" value="1"/>
</dbReference>
<dbReference type="Gene3D" id="3.40.1190.10">
    <property type="entry name" value="Mur-like, catalytic domain"/>
    <property type="match status" value="1"/>
</dbReference>
<dbReference type="InterPro" id="IPR001645">
    <property type="entry name" value="Folylpolyglutamate_synth"/>
</dbReference>
<dbReference type="InterPro" id="IPR018109">
    <property type="entry name" value="Folylpolyglutamate_synth_CS"/>
</dbReference>
<dbReference type="InterPro" id="IPR023600">
    <property type="entry name" value="Folylpolyglutamate_synth_euk"/>
</dbReference>
<dbReference type="InterPro" id="IPR036565">
    <property type="entry name" value="Mur-like_cat_sf"/>
</dbReference>
<dbReference type="InterPro" id="IPR036615">
    <property type="entry name" value="Mur_ligase_C_dom_sf"/>
</dbReference>
<dbReference type="NCBIfam" id="TIGR01499">
    <property type="entry name" value="folC"/>
    <property type="match status" value="1"/>
</dbReference>
<dbReference type="PANTHER" id="PTHR11136:SF5">
    <property type="entry name" value="FOLYLPOLYGLUTAMATE SYNTHASE, MITOCHONDRIAL"/>
    <property type="match status" value="1"/>
</dbReference>
<dbReference type="PANTHER" id="PTHR11136">
    <property type="entry name" value="FOLYLPOLYGLUTAMATE SYNTHASE-RELATED"/>
    <property type="match status" value="1"/>
</dbReference>
<dbReference type="PIRSF" id="PIRSF038895">
    <property type="entry name" value="FPGS"/>
    <property type="match status" value="1"/>
</dbReference>
<dbReference type="SUPFAM" id="SSF53623">
    <property type="entry name" value="MurD-like peptide ligases, catalytic domain"/>
    <property type="match status" value="1"/>
</dbReference>
<dbReference type="SUPFAM" id="SSF53244">
    <property type="entry name" value="MurD-like peptide ligases, peptide-binding domain"/>
    <property type="match status" value="1"/>
</dbReference>
<dbReference type="PROSITE" id="PS01011">
    <property type="entry name" value="FOLYLPOLYGLU_SYNT_1"/>
    <property type="match status" value="1"/>
</dbReference>
<dbReference type="PROSITE" id="PS01012">
    <property type="entry name" value="FOLYLPOLYGLU_SYNT_2"/>
    <property type="match status" value="1"/>
</dbReference>
<keyword id="KW-0067">ATP-binding</keyword>
<keyword id="KW-0963">Cytoplasm</keyword>
<keyword id="KW-0436">Ligase</keyword>
<keyword id="KW-0460">Magnesium</keyword>
<keyword id="KW-0472">Membrane</keyword>
<keyword id="KW-0479">Metal-binding</keyword>
<keyword id="KW-0496">Mitochondrion</keyword>
<keyword id="KW-0999">Mitochondrion inner membrane</keyword>
<keyword id="KW-0547">Nucleotide-binding</keyword>
<keyword id="KW-0554">One-carbon metabolism</keyword>
<sequence length="514" mass="57908">MNQTTETDSMRINLQRTYKDAINALNSLQSNFASIEATKKLGPSVNRNELSINEVHEFTKRLGYTPTDFNKLNIIHITGTKGKGSTCAFTESILKQYTISKIGLYTSPHLKSVRERIRINGQPINQEKFAKYFFEVWDKFTTTKSDPQECPTLQPCDQVKPMYFKYLTILSFHVFLQEGVDTAIYEVGVGGTYDSTNIIDKPTVTGISALGIDHTFMLGNNIASITENKTGIFKKGVPAFVSRQLEYPETHELIEKRAKQLGVSSLEFVDTEDLPNVKLGLSGEFQKQNAALAIRIANSHLKTIGITQDLPEFNNNDGKIKKLSNKFIKGLENVDWPGRCQIINNNPTGITWYIDGAHTIESINASSTWFKQEQIKLEKPKRRALLFNQQGRENYAELLEKLFNVTYGTGSEPQIKFDDVIFTTNTTWSSGQFNSELISKNTSEDAVKKLEVQNNLSEVWRKLDGGVSKRHVFADIETAVNYLKDLGDKDLQVFVCGSLHLVGGFLVVLDNERD</sequence>
<protein>
    <recommendedName>
        <fullName>Folylpolyglutamate synthase</fullName>
        <ecNumber>6.3.2.17</ecNumber>
    </recommendedName>
    <alternativeName>
        <fullName>Folylpoly-gamma-glutamate synthetase</fullName>
        <shortName>FPGS</shortName>
    </alternativeName>
    <alternativeName>
        <fullName>Tetrahydrofolylpolyglutamate synthase</fullName>
        <shortName>Tetrahydrofolate synthase</shortName>
    </alternativeName>
</protein>
<feature type="chain" id="PRO_0000168309" description="Folylpolyglutamate synthase">
    <location>
        <begin position="1"/>
        <end position="514"/>
    </location>
</feature>
<feature type="binding site" evidence="2">
    <location>
        <begin position="82"/>
        <end position="85"/>
    </location>
    <ligand>
        <name>ATP</name>
        <dbReference type="ChEBI" id="CHEBI:30616"/>
    </ligand>
</feature>
<feature type="binding site" evidence="2">
    <location>
        <position position="107"/>
    </location>
    <ligand>
        <name>Mg(2+)</name>
        <dbReference type="ChEBI" id="CHEBI:18420"/>
        <label>1</label>
    </ligand>
</feature>
<feature type="binding site" evidence="2">
    <location>
        <position position="186"/>
    </location>
    <ligand>
        <name>Mg(2+)</name>
        <dbReference type="ChEBI" id="CHEBI:18420"/>
        <label>1</label>
    </ligand>
</feature>
<feature type="binding site" evidence="2">
    <location>
        <position position="214"/>
    </location>
    <ligand>
        <name>Mg(2+)</name>
        <dbReference type="ChEBI" id="CHEBI:18420"/>
        <label>2</label>
    </ligand>
</feature>
<feature type="binding site" evidence="2">
    <location>
        <position position="339"/>
    </location>
    <ligand>
        <name>ATP</name>
        <dbReference type="ChEBI" id="CHEBI:30616"/>
    </ligand>
</feature>
<feature type="binding site" evidence="2">
    <location>
        <position position="355"/>
    </location>
    <ligand>
        <name>ATP</name>
        <dbReference type="ChEBI" id="CHEBI:30616"/>
    </ligand>
</feature>
<organism>
    <name type="scientific">Candida albicans</name>
    <name type="common">Yeast</name>
    <dbReference type="NCBI Taxonomy" id="5476"/>
    <lineage>
        <taxon>Eukaryota</taxon>
        <taxon>Fungi</taxon>
        <taxon>Dikarya</taxon>
        <taxon>Ascomycota</taxon>
        <taxon>Saccharomycotina</taxon>
        <taxon>Pichiomycetes</taxon>
        <taxon>Debaryomycetaceae</taxon>
        <taxon>Candida/Lodderomyces clade</taxon>
        <taxon>Candida</taxon>
    </lineage>
</organism>
<proteinExistence type="inferred from homology"/>
<evidence type="ECO:0000250" key="1"/>
<evidence type="ECO:0000250" key="2">
    <source>
        <dbReference type="UniProtKB" id="P08192"/>
    </source>
</evidence>
<evidence type="ECO:0000305" key="3"/>